<name>HBB2_BORSA</name>
<comment type="function">
    <text evidence="2 3">Involved in oxygen transport from gills to the various peripheral tissues.</text>
</comment>
<comment type="subunit">
    <text evidence="2">Hb 3 is a heterotetramer of two alpha-2 and two beta-2 chains.</text>
</comment>
<comment type="tissue specificity">
    <text evidence="3">Red blood cells.</text>
</comment>
<comment type="miscellaneous">
    <text>Hb 3 displays a Bohr effect, which is enhanced by organophosphates, and a Root effect, which is enhanced by ATP.</text>
</comment>
<comment type="similarity">
    <text evidence="1">Belongs to the globin family.</text>
</comment>
<sequence length="147" mass="16626">MVEWTDSERAIITSIFSNLDYEEIGRKSLCRCLIVYPWTQRYFGAFGNLYNAETIMANPLIAAHGTKILHGLDRALKNMDDIKNTYAELSLLHSDKLHVDPDNFRLLADCLTVVIAAKMGSAFTVETQVAWQKFLSVVVSALGRQYH</sequence>
<dbReference type="EMBL" id="DQ125473">
    <property type="protein sequence ID" value="AAZ99825.1"/>
    <property type="molecule type" value="mRNA"/>
</dbReference>
<dbReference type="SMR" id="Q1AGS6"/>
<dbReference type="GO" id="GO:0072562">
    <property type="term" value="C:blood microparticle"/>
    <property type="evidence" value="ECO:0007669"/>
    <property type="project" value="TreeGrafter"/>
</dbReference>
<dbReference type="GO" id="GO:0031838">
    <property type="term" value="C:haptoglobin-hemoglobin complex"/>
    <property type="evidence" value="ECO:0007669"/>
    <property type="project" value="TreeGrafter"/>
</dbReference>
<dbReference type="GO" id="GO:0005833">
    <property type="term" value="C:hemoglobin complex"/>
    <property type="evidence" value="ECO:0007669"/>
    <property type="project" value="InterPro"/>
</dbReference>
<dbReference type="GO" id="GO:0031720">
    <property type="term" value="F:haptoglobin binding"/>
    <property type="evidence" value="ECO:0007669"/>
    <property type="project" value="TreeGrafter"/>
</dbReference>
<dbReference type="GO" id="GO:0020037">
    <property type="term" value="F:heme binding"/>
    <property type="evidence" value="ECO:0007669"/>
    <property type="project" value="InterPro"/>
</dbReference>
<dbReference type="GO" id="GO:0046872">
    <property type="term" value="F:metal ion binding"/>
    <property type="evidence" value="ECO:0007669"/>
    <property type="project" value="UniProtKB-KW"/>
</dbReference>
<dbReference type="GO" id="GO:0043177">
    <property type="term" value="F:organic acid binding"/>
    <property type="evidence" value="ECO:0007669"/>
    <property type="project" value="TreeGrafter"/>
</dbReference>
<dbReference type="GO" id="GO:0019825">
    <property type="term" value="F:oxygen binding"/>
    <property type="evidence" value="ECO:0007669"/>
    <property type="project" value="InterPro"/>
</dbReference>
<dbReference type="GO" id="GO:0005344">
    <property type="term" value="F:oxygen carrier activity"/>
    <property type="evidence" value="ECO:0007669"/>
    <property type="project" value="UniProtKB-KW"/>
</dbReference>
<dbReference type="GO" id="GO:0004601">
    <property type="term" value="F:peroxidase activity"/>
    <property type="evidence" value="ECO:0007669"/>
    <property type="project" value="TreeGrafter"/>
</dbReference>
<dbReference type="GO" id="GO:0042744">
    <property type="term" value="P:hydrogen peroxide catabolic process"/>
    <property type="evidence" value="ECO:0007669"/>
    <property type="project" value="TreeGrafter"/>
</dbReference>
<dbReference type="CDD" id="cd08925">
    <property type="entry name" value="Hb-beta-like"/>
    <property type="match status" value="1"/>
</dbReference>
<dbReference type="FunFam" id="1.10.490.10:FF:000001">
    <property type="entry name" value="Hemoglobin subunit beta"/>
    <property type="match status" value="1"/>
</dbReference>
<dbReference type="Gene3D" id="1.10.490.10">
    <property type="entry name" value="Globins"/>
    <property type="match status" value="1"/>
</dbReference>
<dbReference type="InterPro" id="IPR000971">
    <property type="entry name" value="Globin"/>
</dbReference>
<dbReference type="InterPro" id="IPR009050">
    <property type="entry name" value="Globin-like_sf"/>
</dbReference>
<dbReference type="InterPro" id="IPR012292">
    <property type="entry name" value="Globin/Proto"/>
</dbReference>
<dbReference type="InterPro" id="IPR002337">
    <property type="entry name" value="Hemoglobin_b"/>
</dbReference>
<dbReference type="InterPro" id="IPR050056">
    <property type="entry name" value="Hemoglobin_oxygen_transport"/>
</dbReference>
<dbReference type="PANTHER" id="PTHR11442">
    <property type="entry name" value="HEMOGLOBIN FAMILY MEMBER"/>
    <property type="match status" value="1"/>
</dbReference>
<dbReference type="PANTHER" id="PTHR11442:SF7">
    <property type="entry name" value="HEMOGLOBIN SUBUNIT EPSILON"/>
    <property type="match status" value="1"/>
</dbReference>
<dbReference type="Pfam" id="PF00042">
    <property type="entry name" value="Globin"/>
    <property type="match status" value="1"/>
</dbReference>
<dbReference type="PRINTS" id="PR00814">
    <property type="entry name" value="BETAHAEM"/>
</dbReference>
<dbReference type="SUPFAM" id="SSF46458">
    <property type="entry name" value="Globin-like"/>
    <property type="match status" value="1"/>
</dbReference>
<dbReference type="PROSITE" id="PS01033">
    <property type="entry name" value="GLOBIN"/>
    <property type="match status" value="1"/>
</dbReference>
<keyword id="KW-0903">Direct protein sequencing</keyword>
<keyword id="KW-0349">Heme</keyword>
<keyword id="KW-0408">Iron</keyword>
<keyword id="KW-0479">Metal-binding</keyword>
<keyword id="KW-0561">Oxygen transport</keyword>
<keyword id="KW-0813">Transport</keyword>
<proteinExistence type="evidence at protein level"/>
<protein>
    <recommendedName>
        <fullName>Hemoglobin subunit beta-2</fullName>
    </recommendedName>
    <alternativeName>
        <fullName>Beta-2-globin</fullName>
    </alternativeName>
    <alternativeName>
        <fullName>Hemoglobin beta-2 chain</fullName>
    </alternativeName>
</protein>
<accession>Q1AGS6</accession>
<accession>P84608</accession>
<evidence type="ECO:0000255" key="1">
    <source>
        <dbReference type="PROSITE-ProRule" id="PRU00238"/>
    </source>
</evidence>
<evidence type="ECO:0000269" key="2">
    <source>
    </source>
</evidence>
<evidence type="ECO:0000305" key="3"/>
<evidence type="ECO:0000312" key="4">
    <source>
        <dbReference type="EMBL" id="AAZ99825.1"/>
    </source>
</evidence>
<gene>
    <name type="primary">hbb2</name>
</gene>
<organism>
    <name type="scientific">Boreogadus saida</name>
    <name type="common">Polar cod</name>
    <name type="synonym">Gadus saida</name>
    <dbReference type="NCBI Taxonomy" id="44932"/>
    <lineage>
        <taxon>Eukaryota</taxon>
        <taxon>Metazoa</taxon>
        <taxon>Chordata</taxon>
        <taxon>Craniata</taxon>
        <taxon>Vertebrata</taxon>
        <taxon>Euteleostomi</taxon>
        <taxon>Actinopterygii</taxon>
        <taxon>Neopterygii</taxon>
        <taxon>Teleostei</taxon>
        <taxon>Neoteleostei</taxon>
        <taxon>Acanthomorphata</taxon>
        <taxon>Zeiogadaria</taxon>
        <taxon>Gadariae</taxon>
        <taxon>Gadiformes</taxon>
        <taxon>Gadoidei</taxon>
        <taxon>Gadidae</taxon>
        <taxon>Boreogadus</taxon>
    </lineage>
</organism>
<feature type="initiator methionine" description="Removed" evidence="2">
    <location>
        <position position="1"/>
    </location>
</feature>
<feature type="chain" id="PRO_0000247583" description="Hemoglobin subunit beta-2">
    <location>
        <begin position="2"/>
        <end position="147"/>
    </location>
</feature>
<feature type="domain" description="Globin" evidence="1">
    <location>
        <begin position="3"/>
        <end position="147"/>
    </location>
</feature>
<feature type="binding site" description="distal binding residue" evidence="1">
    <location>
        <position position="64"/>
    </location>
    <ligand>
        <name>heme b</name>
        <dbReference type="ChEBI" id="CHEBI:60344"/>
    </ligand>
    <ligandPart>
        <name>Fe</name>
        <dbReference type="ChEBI" id="CHEBI:18248"/>
    </ligandPart>
</feature>
<feature type="binding site" description="proximal binding residue" evidence="1">
    <location>
        <position position="93"/>
    </location>
    <ligand>
        <name>heme b</name>
        <dbReference type="ChEBI" id="CHEBI:60344"/>
    </ligand>
    <ligandPart>
        <name>Fe</name>
        <dbReference type="ChEBI" id="CHEBI:18248"/>
    </ligandPart>
</feature>
<feature type="sequence conflict" description="In Ref. 1; AAZ99825." evidence="3" ref="1">
    <original>SA</original>
    <variation>TG</variation>
    <location>
        <begin position="121"/>
        <end position="122"/>
    </location>
</feature>
<reference evidence="3 4" key="1">
    <citation type="journal article" date="2006" name="J. Biol. Chem.">
        <title>The oxygen transport system in three species of the boreal fish family Gadidae. Molecular phylogeny of hemoglobin.</title>
        <authorList>
            <person name="Verde C."/>
            <person name="Balestrieri M."/>
            <person name="de Pascale D."/>
            <person name="Pagnozzi D."/>
            <person name="Lecointre G."/>
            <person name="di Prisco G."/>
        </authorList>
    </citation>
    <scope>PROTEIN SEQUENCE OF 2-147</scope>
    <scope>NUCLEOTIDE SEQUENCE [MRNA] OF 20-147</scope>
    <scope>FUNCTION</scope>
    <scope>SUBUNIT</scope>
    <source>
        <tissue evidence="2">Blood</tissue>
        <tissue evidence="2">Spleen</tissue>
    </source>
</reference>